<proteinExistence type="predicted"/>
<name>YFJW_ECOLI</name>
<comment type="subcellular location">
    <subcellularLocation>
        <location evidence="2">Cell membrane</location>
        <topology evidence="2">Multi-pass membrane protein</topology>
    </subcellularLocation>
</comment>
<accession>P52138</accession>
<accession>P77016</accession>
<sequence length="567" mass="64196">MAFVSEREIVRKIFSKKIDFTILAFFYISSIFFLLCSGVLFQYFTAAFTKGNCYECSMKLDYIKQFYFSLETAWYLISAVAVFIASVFIQHRIKAYLTLLAITWIVLTITDVALIHALDNIAMNNILLNILYNLFGAILLSLFMCLSNSLLFHLNKIKHIPMILSAMIPLVSAIIIAILITAVIYLLFARQAVEIEMDISEGSDIAYVGVKDNEESFGFLNDKKTDTPTYLDVIKNGSLIYNDTQGLSGADIYIVSGCYALPDLLRNVPLDAKKSFLNVKKLEITQKLPMMGFIQGESADVMPKAASRLSLSKQDDKFMLASSVTDSQIKFKSNNAQLMVAFAFMPITTNGILHDYTYDIIINDKKYKIENHVAPLSRLDKNKKMKCEYQQISDLTNTYNINANYLTGFLLVLKPDDIINYNNSPSVLLKTDFAFYKKTYQKLDKIYDDISNGKLSSLRATGISQFSINGKHLSLRPESEIIISEGSLYGLVNKSKKIKIYGTADLVFVDNKIMNLRKITYLQSKLEIFGSSIMDILKYIFGLGLLAISIKFIHSYFKNDVNENLFL</sequence>
<dbReference type="EMBL" id="U36840">
    <property type="protein sequence ID" value="AAA79810.1"/>
    <property type="molecule type" value="Genomic_DNA"/>
</dbReference>
<dbReference type="EMBL" id="U00096">
    <property type="protein sequence ID" value="AAC75690.1"/>
    <property type="molecule type" value="Genomic_DNA"/>
</dbReference>
<dbReference type="EMBL" id="AP009048">
    <property type="protein sequence ID" value="BAA16510.1"/>
    <property type="molecule type" value="Genomic_DNA"/>
</dbReference>
<dbReference type="PIR" id="D65043">
    <property type="entry name" value="D65043"/>
</dbReference>
<dbReference type="PIR" id="T08653">
    <property type="entry name" value="T08653"/>
</dbReference>
<dbReference type="RefSeq" id="NP_417129.1">
    <property type="nucleotide sequence ID" value="NC_000913.3"/>
</dbReference>
<dbReference type="RefSeq" id="WP_000896263.1">
    <property type="nucleotide sequence ID" value="NZ_JACEFS010000019.1"/>
</dbReference>
<dbReference type="SMR" id="P52138"/>
<dbReference type="BioGRID" id="4260634">
    <property type="interactions" value="15"/>
</dbReference>
<dbReference type="DIP" id="DIP-12088N"/>
<dbReference type="FunCoup" id="P52138">
    <property type="interactions" value="234"/>
</dbReference>
<dbReference type="IntAct" id="P52138">
    <property type="interactions" value="2"/>
</dbReference>
<dbReference type="STRING" id="511145.b2642"/>
<dbReference type="PaxDb" id="511145-b2642"/>
<dbReference type="EnsemblBacteria" id="AAC75690">
    <property type="protein sequence ID" value="AAC75690"/>
    <property type="gene ID" value="b2642"/>
</dbReference>
<dbReference type="GeneID" id="947128"/>
<dbReference type="KEGG" id="ecj:JW2623"/>
<dbReference type="KEGG" id="eco:b2642"/>
<dbReference type="KEGG" id="ecoc:C3026_14600"/>
<dbReference type="PATRIC" id="fig|1411691.4.peg.4098"/>
<dbReference type="EchoBASE" id="EB3001"/>
<dbReference type="eggNOG" id="ENOG5033S22">
    <property type="taxonomic scope" value="Bacteria"/>
</dbReference>
<dbReference type="HOGENOM" id="CLU_480407_0_0_6"/>
<dbReference type="InParanoid" id="P52138"/>
<dbReference type="OrthoDB" id="9986801at2"/>
<dbReference type="BioCyc" id="EcoCyc:G7377-MONOMER"/>
<dbReference type="PRO" id="PR:P52138"/>
<dbReference type="Proteomes" id="UP000000625">
    <property type="component" value="Chromosome"/>
</dbReference>
<dbReference type="GO" id="GO:0005886">
    <property type="term" value="C:plasma membrane"/>
    <property type="evidence" value="ECO:0000314"/>
    <property type="project" value="EcoCyc"/>
</dbReference>
<reference key="1">
    <citation type="journal article" date="1997" name="DNA Res.">
        <title>Construction of a contiguous 874-kb sequence of the Escherichia coli-K12 genome corresponding to 50.0-68.8 min on the linkage map and analysis of its sequence features.</title>
        <authorList>
            <person name="Yamamoto Y."/>
            <person name="Aiba H."/>
            <person name="Baba T."/>
            <person name="Hayashi K."/>
            <person name="Inada T."/>
            <person name="Isono K."/>
            <person name="Itoh T."/>
            <person name="Kimura S."/>
            <person name="Kitagawa M."/>
            <person name="Makino K."/>
            <person name="Miki T."/>
            <person name="Mitsuhashi N."/>
            <person name="Mizobuchi K."/>
            <person name="Mori H."/>
            <person name="Nakade S."/>
            <person name="Nakamura Y."/>
            <person name="Nashimoto H."/>
            <person name="Oshima T."/>
            <person name="Oyama S."/>
            <person name="Saito N."/>
            <person name="Sampei G."/>
            <person name="Satoh Y."/>
            <person name="Sivasundaram S."/>
            <person name="Tagami H."/>
            <person name="Takahashi H."/>
            <person name="Takeda J."/>
            <person name="Takemoto K."/>
            <person name="Uehara K."/>
            <person name="Wada C."/>
            <person name="Yamagata S."/>
            <person name="Horiuchi T."/>
        </authorList>
    </citation>
    <scope>NUCLEOTIDE SEQUENCE [LARGE SCALE GENOMIC DNA]</scope>
    <source>
        <strain>K12 / W3110 / ATCC 27325 / DSM 5911</strain>
    </source>
</reference>
<reference key="2">
    <citation type="journal article" date="1997" name="Science">
        <title>The complete genome sequence of Escherichia coli K-12.</title>
        <authorList>
            <person name="Blattner F.R."/>
            <person name="Plunkett G. III"/>
            <person name="Bloch C.A."/>
            <person name="Perna N.T."/>
            <person name="Burland V."/>
            <person name="Riley M."/>
            <person name="Collado-Vides J."/>
            <person name="Glasner J.D."/>
            <person name="Rode C.K."/>
            <person name="Mayhew G.F."/>
            <person name="Gregor J."/>
            <person name="Davis N.W."/>
            <person name="Kirkpatrick H.A."/>
            <person name="Goeden M.A."/>
            <person name="Rose D.J."/>
            <person name="Mau B."/>
            <person name="Shao Y."/>
        </authorList>
    </citation>
    <scope>NUCLEOTIDE SEQUENCE [LARGE SCALE GENOMIC DNA]</scope>
    <source>
        <strain>K12 / MG1655 / ATCC 47076</strain>
    </source>
</reference>
<reference key="3">
    <citation type="journal article" date="2006" name="Mol. Syst. Biol.">
        <title>Highly accurate genome sequences of Escherichia coli K-12 strains MG1655 and W3110.</title>
        <authorList>
            <person name="Hayashi K."/>
            <person name="Morooka N."/>
            <person name="Yamamoto Y."/>
            <person name="Fujita K."/>
            <person name="Isono K."/>
            <person name="Choi S."/>
            <person name="Ohtsubo E."/>
            <person name="Baba T."/>
            <person name="Wanner B.L."/>
            <person name="Mori H."/>
            <person name="Horiuchi T."/>
        </authorList>
    </citation>
    <scope>NUCLEOTIDE SEQUENCE [LARGE SCALE GENOMIC DNA]</scope>
    <source>
        <strain>K12 / W3110 / ATCC 27325 / DSM 5911</strain>
    </source>
</reference>
<organism>
    <name type="scientific">Escherichia coli (strain K12)</name>
    <dbReference type="NCBI Taxonomy" id="83333"/>
    <lineage>
        <taxon>Bacteria</taxon>
        <taxon>Pseudomonadati</taxon>
        <taxon>Pseudomonadota</taxon>
        <taxon>Gammaproteobacteria</taxon>
        <taxon>Enterobacterales</taxon>
        <taxon>Enterobacteriaceae</taxon>
        <taxon>Escherichia</taxon>
    </lineage>
</organism>
<gene>
    <name type="primary">yfjW</name>
    <name type="ordered locus">b2642</name>
    <name type="ordered locus">JW2623</name>
</gene>
<evidence type="ECO:0000255" key="1"/>
<evidence type="ECO:0000305" key="2"/>
<keyword id="KW-1003">Cell membrane</keyword>
<keyword id="KW-0472">Membrane</keyword>
<keyword id="KW-1185">Reference proteome</keyword>
<keyword id="KW-0812">Transmembrane</keyword>
<keyword id="KW-1133">Transmembrane helix</keyword>
<protein>
    <recommendedName>
        <fullName>Uncharacterized protein YfjW</fullName>
    </recommendedName>
</protein>
<feature type="chain" id="PRO_0000169283" description="Uncharacterized protein YfjW">
    <location>
        <begin position="1"/>
        <end position="567"/>
    </location>
</feature>
<feature type="transmembrane region" description="Helical" evidence="1">
    <location>
        <begin position="20"/>
        <end position="40"/>
    </location>
</feature>
<feature type="transmembrane region" description="Helical" evidence="1">
    <location>
        <begin position="69"/>
        <end position="89"/>
    </location>
</feature>
<feature type="transmembrane region" description="Helical" evidence="1">
    <location>
        <begin position="95"/>
        <end position="115"/>
    </location>
</feature>
<feature type="transmembrane region" description="Helical" evidence="1">
    <location>
        <begin position="126"/>
        <end position="146"/>
    </location>
</feature>
<feature type="transmembrane region" description="Helical" evidence="1">
    <location>
        <begin position="168"/>
        <end position="188"/>
    </location>
</feature>
<feature type="transmembrane region" description="Helical" evidence="1">
    <location>
        <begin position="528"/>
        <end position="548"/>
    </location>
</feature>
<feature type="sequence conflict" description="In Ref. 2; AAA79810." evidence="2" ref="2">
    <original>K</original>
    <variation>T</variation>
    <location>
        <position position="235"/>
    </location>
</feature>